<sequence>MDALCASMKGTAQLVAICNQESAFWGEKISGRRLINKGFGVRSCKSFTTQQRGRNVTPAVLTRDINKEMLPFEESMFEEQPTADPKAVASVILGGGVGTRLFPLTSRRAKPAVPIGGCYRLIDVPMSNCINSGIRKIFILTQFNSFSLNRHLATYNFGNGVGFGDGFVEVLAGTQTPGDGRKMWFQAADAVREFIWVFENQKNKNVEHIIILSGDHLYRMNYMDFVQKHIDTNADITVSCVPMDDGRASDFGLMKIDETGAIIQFAEKPKGPALKAMQVDTSILGLSEQEASNFPYIASMGVYVFKTDVLLNLLKSAYPSCNDFGSEIIPSAVKDHNVQAYLFNDYWEDIGTVKSFFDANLALTKQPPKFDFNDPKTPFYTSARFLPPTKVDKSRIVDAIISHGCFLRECNIQHSIVGVRSRLDYGVEFKDTMMMGADYYQTECEIASLLAEGKVPIGVGPNTKIQNCIIDKNAKIGKDVVILNKEGVEEADRSAEGFYIRSGITVIMKNATIKDGTVI</sequence>
<proteinExistence type="evidence at transcript level"/>
<name>GLGL2_SOLTU</name>
<evidence type="ECO:0000255" key="1"/>
<evidence type="ECO:0000305" key="2"/>
<feature type="transit peptide" description="Chloroplast" evidence="1">
    <location>
        <begin position="1"/>
        <end status="unknown"/>
    </location>
</feature>
<feature type="chain" id="PRO_0000011167" description="Glucose-1-phosphate adenylyltransferase large subunit 2, chloroplastic/amyloplastic">
    <location>
        <begin status="unknown"/>
        <end position="519"/>
    </location>
</feature>
<dbReference type="EC" id="2.7.7.27"/>
<dbReference type="EMBL" id="X74982">
    <property type="protein sequence ID" value="CAA52917.1"/>
    <property type="molecule type" value="mRNA"/>
</dbReference>
<dbReference type="PIR" id="S53991">
    <property type="entry name" value="S53991"/>
</dbReference>
<dbReference type="RefSeq" id="NP_001305598.1">
    <property type="nucleotide sequence ID" value="NM_001318669.1"/>
</dbReference>
<dbReference type="SMR" id="P55242"/>
<dbReference type="FunCoup" id="P55242">
    <property type="interactions" value="355"/>
</dbReference>
<dbReference type="STRING" id="4113.P55242"/>
<dbReference type="PaxDb" id="4113-PGSC0003DMT400041215"/>
<dbReference type="GeneID" id="102600909"/>
<dbReference type="KEGG" id="sot:102600909"/>
<dbReference type="eggNOG" id="KOG1322">
    <property type="taxonomic scope" value="Eukaryota"/>
</dbReference>
<dbReference type="InParanoid" id="P55242"/>
<dbReference type="OrthoDB" id="1733332at2759"/>
<dbReference type="BRENDA" id="2.7.7.27">
    <property type="organism ID" value="5757"/>
</dbReference>
<dbReference type="UniPathway" id="UPA00152"/>
<dbReference type="Proteomes" id="UP000011115">
    <property type="component" value="Unassembled WGS sequence"/>
</dbReference>
<dbReference type="ExpressionAtlas" id="P55242">
    <property type="expression patterns" value="baseline"/>
</dbReference>
<dbReference type="GO" id="GO:0009501">
    <property type="term" value="C:amyloplast"/>
    <property type="evidence" value="ECO:0007669"/>
    <property type="project" value="UniProtKB-SubCell"/>
</dbReference>
<dbReference type="GO" id="GO:0009507">
    <property type="term" value="C:chloroplast"/>
    <property type="evidence" value="ECO:0007669"/>
    <property type="project" value="UniProtKB-SubCell"/>
</dbReference>
<dbReference type="GO" id="GO:0005524">
    <property type="term" value="F:ATP binding"/>
    <property type="evidence" value="ECO:0007669"/>
    <property type="project" value="UniProtKB-KW"/>
</dbReference>
<dbReference type="GO" id="GO:0008878">
    <property type="term" value="F:glucose-1-phosphate adenylyltransferase activity"/>
    <property type="evidence" value="ECO:0007669"/>
    <property type="project" value="UniProtKB-EC"/>
</dbReference>
<dbReference type="GO" id="GO:0005978">
    <property type="term" value="P:glycogen biosynthetic process"/>
    <property type="evidence" value="ECO:0007669"/>
    <property type="project" value="InterPro"/>
</dbReference>
<dbReference type="GO" id="GO:0019252">
    <property type="term" value="P:starch biosynthetic process"/>
    <property type="evidence" value="ECO:0007669"/>
    <property type="project" value="UniProtKB-UniPathway"/>
</dbReference>
<dbReference type="CDD" id="cd02508">
    <property type="entry name" value="ADP_Glucose_PP"/>
    <property type="match status" value="1"/>
</dbReference>
<dbReference type="CDD" id="cd04651">
    <property type="entry name" value="LbH_G1P_AT_C"/>
    <property type="match status" value="1"/>
</dbReference>
<dbReference type="FunFam" id="2.160.10.10:FF:000010">
    <property type="entry name" value="Glucose-1-phosphate adenylyltransferase"/>
    <property type="match status" value="1"/>
</dbReference>
<dbReference type="FunFam" id="3.90.550.10:FF:000030">
    <property type="entry name" value="Glucose-1-phosphate adenylyltransferase"/>
    <property type="match status" value="1"/>
</dbReference>
<dbReference type="Gene3D" id="2.160.10.10">
    <property type="entry name" value="Hexapeptide repeat proteins"/>
    <property type="match status" value="1"/>
</dbReference>
<dbReference type="Gene3D" id="3.90.550.10">
    <property type="entry name" value="Spore Coat Polysaccharide Biosynthesis Protein SpsA, Chain A"/>
    <property type="match status" value="1"/>
</dbReference>
<dbReference type="InterPro" id="IPR011831">
    <property type="entry name" value="ADP-Glc_PPase"/>
</dbReference>
<dbReference type="InterPro" id="IPR005836">
    <property type="entry name" value="ADP_Glu_pyroP_CS"/>
</dbReference>
<dbReference type="InterPro" id="IPR005835">
    <property type="entry name" value="NTP_transferase_dom"/>
</dbReference>
<dbReference type="InterPro" id="IPR029044">
    <property type="entry name" value="Nucleotide-diphossugar_trans"/>
</dbReference>
<dbReference type="InterPro" id="IPR011004">
    <property type="entry name" value="Trimer_LpxA-like_sf"/>
</dbReference>
<dbReference type="NCBIfam" id="TIGR02091">
    <property type="entry name" value="glgC"/>
    <property type="match status" value="1"/>
</dbReference>
<dbReference type="NCBIfam" id="NF002772">
    <property type="entry name" value="PRK02862.1"/>
    <property type="match status" value="1"/>
</dbReference>
<dbReference type="PANTHER" id="PTHR43523:SF12">
    <property type="entry name" value="GLUCOSE-1-PHOSPHATE ADENYLYLTRANSFERASE LARGE SUBUNIT 1, CHLOROPLASTIC-RELATED"/>
    <property type="match status" value="1"/>
</dbReference>
<dbReference type="PANTHER" id="PTHR43523">
    <property type="entry name" value="GLUCOSE-1-PHOSPHATE ADENYLYLTRANSFERASE-RELATED"/>
    <property type="match status" value="1"/>
</dbReference>
<dbReference type="Pfam" id="PF25247">
    <property type="entry name" value="LbH_GLGC"/>
    <property type="match status" value="1"/>
</dbReference>
<dbReference type="Pfam" id="PF00483">
    <property type="entry name" value="NTP_transferase"/>
    <property type="match status" value="1"/>
</dbReference>
<dbReference type="SUPFAM" id="SSF53448">
    <property type="entry name" value="Nucleotide-diphospho-sugar transferases"/>
    <property type="match status" value="1"/>
</dbReference>
<dbReference type="SUPFAM" id="SSF51161">
    <property type="entry name" value="Trimeric LpxA-like enzymes"/>
    <property type="match status" value="1"/>
</dbReference>
<dbReference type="PROSITE" id="PS00808">
    <property type="entry name" value="ADP_GLC_PYROPHOSPH_1"/>
    <property type="match status" value="1"/>
</dbReference>
<dbReference type="PROSITE" id="PS00810">
    <property type="entry name" value="ADP_GLC_PYROPHOSPH_3"/>
    <property type="match status" value="1"/>
</dbReference>
<gene>
    <name type="primary">AGPS2</name>
</gene>
<comment type="function">
    <text>This protein plays a role in synthesis of starch. It catalyzes the synthesis of the activated glycosyl donor, ADP-glucose from Glc-1-P and ATP.</text>
</comment>
<comment type="catalytic activity">
    <reaction>
        <text>alpha-D-glucose 1-phosphate + ATP + H(+) = ADP-alpha-D-glucose + diphosphate</text>
        <dbReference type="Rhea" id="RHEA:12120"/>
        <dbReference type="ChEBI" id="CHEBI:15378"/>
        <dbReference type="ChEBI" id="CHEBI:30616"/>
        <dbReference type="ChEBI" id="CHEBI:33019"/>
        <dbReference type="ChEBI" id="CHEBI:57498"/>
        <dbReference type="ChEBI" id="CHEBI:58601"/>
        <dbReference type="EC" id="2.7.7.27"/>
    </reaction>
</comment>
<comment type="activity regulation">
    <text>Activated by 3'phosphoglycerate, inhibited by orthophosphate. Allosteric regulation.</text>
</comment>
<comment type="pathway">
    <text>Glycan biosynthesis; starch biosynthesis.</text>
</comment>
<comment type="subunit">
    <text>Heterotetramer.</text>
</comment>
<comment type="subcellular location">
    <subcellularLocation>
        <location>Plastid</location>
        <location>Chloroplast</location>
    </subcellularLocation>
    <subcellularLocation>
        <location>Plastid</location>
        <location>Amyloplast</location>
    </subcellularLocation>
    <text>Found in the chloroplast in leaf. Found in the plastid in the developing endosperm.</text>
</comment>
<comment type="tissue specificity">
    <text>Leaves and tubers.</text>
</comment>
<comment type="developmental stage">
    <text>The strongest expression is seen in very small leaves (less than 1 cm in length) and decreases steadily as leaves become older. There is approximately 4- to 6-fold stronger expression in sink leaves relative to source leaves. Only minor variations in expression are seen during early stages of tuber development, however expression declines with increase in tuber size.</text>
</comment>
<comment type="induction">
    <text>By sucrose.</text>
</comment>
<comment type="similarity">
    <text evidence="2">Belongs to the bacterial/plant glucose-1-phosphate adenylyltransferase family.</text>
</comment>
<keyword id="KW-0021">Allosteric enzyme</keyword>
<keyword id="KW-0035">Amyloplast</keyword>
<keyword id="KW-0067">ATP-binding</keyword>
<keyword id="KW-0150">Chloroplast</keyword>
<keyword id="KW-0547">Nucleotide-binding</keyword>
<keyword id="KW-0548">Nucleotidyltransferase</keyword>
<keyword id="KW-0934">Plastid</keyword>
<keyword id="KW-1185">Reference proteome</keyword>
<keyword id="KW-0750">Starch biosynthesis</keyword>
<keyword id="KW-0808">Transferase</keyword>
<keyword id="KW-0809">Transit peptide</keyword>
<protein>
    <recommendedName>
        <fullName>Glucose-1-phosphate adenylyltransferase large subunit 2, chloroplastic/amyloplastic</fullName>
        <ecNumber>2.7.7.27</ecNumber>
    </recommendedName>
    <alternativeName>
        <fullName>ADP-glucose pyrophosphorylase</fullName>
    </alternativeName>
    <alternativeName>
        <fullName>ADP-glucose synthase</fullName>
    </alternativeName>
    <alternativeName>
        <fullName>AGPase S</fullName>
    </alternativeName>
    <alternativeName>
        <fullName>Alpha-D-glucose-1-phosphate adenyl transferase</fullName>
    </alternativeName>
</protein>
<accession>P55242</accession>
<organism>
    <name type="scientific">Solanum tuberosum</name>
    <name type="common">Potato</name>
    <dbReference type="NCBI Taxonomy" id="4113"/>
    <lineage>
        <taxon>Eukaryota</taxon>
        <taxon>Viridiplantae</taxon>
        <taxon>Streptophyta</taxon>
        <taxon>Embryophyta</taxon>
        <taxon>Tracheophyta</taxon>
        <taxon>Spermatophyta</taxon>
        <taxon>Magnoliopsida</taxon>
        <taxon>eudicotyledons</taxon>
        <taxon>Gunneridae</taxon>
        <taxon>Pentapetalae</taxon>
        <taxon>asterids</taxon>
        <taxon>lamiids</taxon>
        <taxon>Solanales</taxon>
        <taxon>Solanaceae</taxon>
        <taxon>Solanoideae</taxon>
        <taxon>Solaneae</taxon>
        <taxon>Solanum</taxon>
    </lineage>
</organism>
<reference key="1">
    <citation type="journal article" date="1995" name="Mol. Gen. Genet.">
        <title>Molecular cloning and characterization of novel isoforms of potato ADP-glucose pyrophosphorylase.</title>
        <authorList>
            <person name="la Cognata U."/>
            <person name="Willmitzer L."/>
            <person name="Mueller-Roeber B."/>
        </authorList>
    </citation>
    <scope>NUCLEOTIDE SEQUENCE [MRNA]</scope>
    <source>
        <strain>cv. Desiree</strain>
        <tissue>Leaf</tissue>
    </source>
</reference>